<comment type="function">
    <text evidence="5 6 7 8">Required for the establishment and maintenance of stable cell fate in several lineages including V5.pa, T, Z1/Z4 and QR lineages probably by repressing the expression of cell fate determinants (PubMed:20181741, PubMed:24346701). Required to maintain non-distal tip cell (DTC) fate of somatic gonadal cells through the htz-1-mediated repression of transcription factor ceh-22. Regulates the subnuclear localization of histone variant htz-1 in somatic gonadal cells (PubMed:24346701). Plays a role in the attenuation of the let-60/ras pathway, probably by preventing expression of activators of the pathway (PubMed:24285704, PubMed:24349540). Involved in adult locomotion. Acts together with the sumoylation pathway to prevent muscle myosin depletion in aging adults probably by preventing myoblast growth factor receptor egl-15 overexpression (PubMed:24285704). May play a role in vulva development (PubMed:24349540).</text>
</comment>
<comment type="subunit">
    <text evidence="5 8">Interacts with acetylated histone H4 (PubMed:20181741). Interacts (via BROMO domain 2) with smo-1 and ubc-9 (PubMed:24349540).</text>
</comment>
<comment type="interaction">
    <interactant intactId="EBI-311872">
        <id>Q95Y80</id>
    </interactant>
    <interactant intactId="EBI-311877">
        <id>Q965X6</id>
        <label>siah-1</label>
    </interactant>
    <organismsDiffer>false</organismsDiffer>
    <experiments>2</experiments>
</comment>
<comment type="subcellular location">
    <subcellularLocation>
        <location evidence="5">Nucleus</location>
    </subcellularLocation>
    <subcellularLocation>
        <location evidence="5">Chromosome</location>
    </subcellularLocation>
    <text evidence="5">Localizes to granular structures in interphase and co-localizes with chromosomes during metaphase.</text>
</comment>
<comment type="alternative products">
    <event type="alternative splicing"/>
    <isoform>
        <id>Q95Y80-1</id>
        <name evidence="12">a</name>
        <sequence type="displayed"/>
    </isoform>
    <isoform>
        <id>Q95Y80-2</id>
        <name evidence="13">b</name>
        <sequence type="described" ref="VSP_057964 VSP_057965"/>
    </isoform>
</comment>
<comment type="tissue specificity">
    <text evidence="5">Expressed in T-cells, Q-cells, V5-cells and their descendants such as somatic gonad and syncytium.</text>
</comment>
<comment type="domain">
    <text evidence="8">The BROMO domain 2 is essential for the interaction with smo-1 and E2 enzyme ubc-9.</text>
</comment>
<comment type="disruption phenotype">
    <text evidence="5 7 8 9">Abnormal cell fate determination of several lineages. T.p daughter cells adopt a hypodermal cell fate instead of a neuronal cell fate resulting in the loss of the phasmid socket cell. Generation of ectopic PDE, AVM and PVM neurons, and distal tip cell (DTC) (PubMed:20181741, PubMed:24346701). In addition, ectopic egl-17 expression in multiple vulva precursor cells and ectopic che-22 expression in extra distal tip cells (PubMed:24346701, PubMed:24349540). Moderate increase in mpk-1 phosphorylation (PubMed:24349540). RNAi-mediated knockdown further suppresses the age-dependent paralysis phenotype of the spop-1 gk630214 or dr95 mutants (PubMed:34593637).</text>
</comment>
<comment type="similarity">
    <text evidence="10">Belongs to the BET family.</text>
</comment>
<protein>
    <recommendedName>
        <fullName evidence="10">Bromodomain-containing protein bet-1</fullName>
    </recommendedName>
</protein>
<feature type="chain" id="PRO_0000434603" description="Bromodomain-containing protein bet-1" evidence="10">
    <location>
        <begin position="1"/>
        <end position="853"/>
    </location>
</feature>
<feature type="domain" description="Bromo 1" evidence="2">
    <location>
        <begin position="39"/>
        <end position="145"/>
    </location>
</feature>
<feature type="domain" description="Bromo 2" evidence="2">
    <location>
        <begin position="257"/>
        <end position="366"/>
    </location>
</feature>
<feature type="domain" description="NET" evidence="3">
    <location>
        <begin position="516"/>
        <end position="601"/>
    </location>
</feature>
<feature type="region of interest" description="Disordered" evidence="4">
    <location>
        <begin position="1"/>
        <end position="22"/>
    </location>
</feature>
<feature type="region of interest" description="Disordered" evidence="4">
    <location>
        <begin position="141"/>
        <end position="245"/>
    </location>
</feature>
<feature type="region of interest" description="Disordered" evidence="4">
    <location>
        <begin position="369"/>
        <end position="418"/>
    </location>
</feature>
<feature type="region of interest" description="Disordered" evidence="4">
    <location>
        <begin position="594"/>
        <end position="814"/>
    </location>
</feature>
<feature type="region of interest" description="Disordered" evidence="4">
    <location>
        <begin position="819"/>
        <end position="838"/>
    </location>
</feature>
<feature type="coiled-coil region" evidence="1">
    <location>
        <begin position="419"/>
        <end position="458"/>
    </location>
</feature>
<feature type="compositionally biased region" description="Polar residues" evidence="4">
    <location>
        <begin position="1"/>
        <end position="19"/>
    </location>
</feature>
<feature type="compositionally biased region" description="Basic and acidic residues" evidence="4">
    <location>
        <begin position="141"/>
        <end position="153"/>
    </location>
</feature>
<feature type="compositionally biased region" description="Low complexity" evidence="4">
    <location>
        <begin position="166"/>
        <end position="175"/>
    </location>
</feature>
<feature type="compositionally biased region" description="Low complexity" evidence="4">
    <location>
        <begin position="192"/>
        <end position="215"/>
    </location>
</feature>
<feature type="compositionally biased region" description="Low complexity" evidence="4">
    <location>
        <begin position="369"/>
        <end position="381"/>
    </location>
</feature>
<feature type="compositionally biased region" description="Basic and acidic residues" evidence="4">
    <location>
        <begin position="394"/>
        <end position="410"/>
    </location>
</feature>
<feature type="compositionally biased region" description="Low complexity" evidence="4">
    <location>
        <begin position="612"/>
        <end position="624"/>
    </location>
</feature>
<feature type="compositionally biased region" description="Polar residues" evidence="4">
    <location>
        <begin position="684"/>
        <end position="696"/>
    </location>
</feature>
<feature type="compositionally biased region" description="Low complexity" evidence="4">
    <location>
        <begin position="708"/>
        <end position="736"/>
    </location>
</feature>
<feature type="compositionally biased region" description="Polar residues" evidence="4">
    <location>
        <begin position="786"/>
        <end position="807"/>
    </location>
</feature>
<feature type="compositionally biased region" description="Basic and acidic residues" evidence="4">
    <location>
        <begin position="819"/>
        <end position="832"/>
    </location>
</feature>
<feature type="cross-link" description="Glycyl lysine isopeptide (Lys-Gly) (interchain with G-Cter in SUMO)" evidence="8">
    <location>
        <position position="252"/>
    </location>
</feature>
<feature type="splice variant" id="VSP_057964" description="In isoform b." evidence="10">
    <original>APKPAPVPAPTSSRPPAAPRPPSKPKK</original>
    <variation>KFYNCFHSYTPPLKVEKKIIKLLVNFC</variation>
    <location>
        <begin position="739"/>
        <end position="765"/>
    </location>
</feature>
<feature type="splice variant" id="VSP_057965" description="In isoform b." evidence="10">
    <location>
        <begin position="766"/>
        <end position="853"/>
    </location>
</feature>
<feature type="mutagenesis site" description="In os118; 50 percent of animals lack phasmid socket cell and have an ectopic distal tip cell; when associated with K-585." evidence="5">
    <original>V</original>
    <variation>I</variation>
    <location>
        <position position="113"/>
    </location>
</feature>
<feature type="mutagenesis site" description="Loss of interaction with smo-1 and ubc-9." evidence="8">
    <original>K</original>
    <variation>R</variation>
    <location>
        <position position="252"/>
    </location>
</feature>
<feature type="mutagenesis site" description="No effect on the interaction with smo-1 and ubc-9." evidence="8">
    <original>K</original>
    <variation>R</variation>
    <location>
        <position position="253"/>
    </location>
</feature>
<feature type="mutagenesis site" description="No effect on the interaction with smo-1; when associated with R-276 and R-277." evidence="8">
    <original>K</original>
    <variation>R</variation>
    <location>
        <position position="264"/>
    </location>
</feature>
<feature type="mutagenesis site" description="No effect on the interaction with smo-1; when associated with R-264." evidence="8">
    <original>KK</original>
    <variation>RR</variation>
    <location>
        <begin position="276"/>
        <end position="277"/>
    </location>
</feature>
<feature type="mutagenesis site" description="No effect on the interaction with smo-1; when associated with R-313 and R-315." evidence="8">
    <original>K</original>
    <variation>R</variation>
    <location>
        <position position="304"/>
    </location>
</feature>
<feature type="mutagenesis site" description="No effect on the interaction with smo-1; when associated with R-304 and R-315." evidence="8">
    <original>K</original>
    <variation>R</variation>
    <location>
        <position position="313"/>
    </location>
</feature>
<feature type="mutagenesis site" description="No effect on the interaction with smo-1; when associated with R-304 and R-313." evidence="8">
    <original>K</original>
    <variation>R</variation>
    <location>
        <position position="315"/>
    </location>
</feature>
<feature type="mutagenesis site" description="In os118; 50 percent of animals lack phasmid socket cell and have an ectopic distal tip cell; when associated with I-113." evidence="5">
    <original>E</original>
    <variation>K</variation>
    <location>
        <position position="585"/>
    </location>
</feature>
<dbReference type="EMBL" id="BX284601">
    <property type="protein sequence ID" value="CCD68304.1"/>
    <property type="molecule type" value="Genomic_DNA"/>
</dbReference>
<dbReference type="EMBL" id="BX284601">
    <property type="protein sequence ID" value="CCD68309.1"/>
    <property type="molecule type" value="Genomic_DNA"/>
</dbReference>
<dbReference type="RefSeq" id="NP_001367705.1">
    <molecule id="Q95Y80-1"/>
    <property type="nucleotide sequence ID" value="NM_001379840.2"/>
</dbReference>
<dbReference type="RefSeq" id="NP_491384.3">
    <property type="nucleotide sequence ID" value="NM_058983.3"/>
</dbReference>
<dbReference type="RefSeq" id="NP_871879.1">
    <property type="nucleotide sequence ID" value="NM_182079.3"/>
</dbReference>
<dbReference type="SMR" id="Q95Y80"/>
<dbReference type="DIP" id="DIP-26262N"/>
<dbReference type="FunCoup" id="Q95Y80">
    <property type="interactions" value="2363"/>
</dbReference>
<dbReference type="IntAct" id="Q95Y80">
    <property type="interactions" value="2"/>
</dbReference>
<dbReference type="STRING" id="6239.Y119C1B.8a.1"/>
<dbReference type="PaxDb" id="6239-Y119C1B.8a"/>
<dbReference type="PeptideAtlas" id="Q95Y80"/>
<dbReference type="EnsemblMetazoa" id="Y119C1B.8a.1">
    <molecule id="Q95Y80-1"/>
    <property type="protein sequence ID" value="Y119C1B.8a.1"/>
    <property type="gene ID" value="WBGene00022473"/>
</dbReference>
<dbReference type="EnsemblMetazoa" id="Y119C1B.8b.1">
    <property type="protein sequence ID" value="Y119C1B.8b.1"/>
    <property type="gene ID" value="WBGene00022473"/>
</dbReference>
<dbReference type="GeneID" id="172054"/>
<dbReference type="UCSC" id="Y119C1B.8a">
    <molecule id="Q95Y80-1"/>
    <property type="organism name" value="c. elegans"/>
</dbReference>
<dbReference type="AGR" id="WB:WBGene00022473"/>
<dbReference type="WormBase" id="Y119C1B.8a">
    <molecule id="Q95Y80-1"/>
    <property type="protein sequence ID" value="CE44037"/>
    <property type="gene ID" value="WBGene00022473"/>
    <property type="gene designation" value="bet-1"/>
</dbReference>
<dbReference type="WormBase" id="Y119C1B.8b">
    <molecule id="Q95Y80-2"/>
    <property type="protein sequence ID" value="CE33207"/>
    <property type="gene ID" value="WBGene00022473"/>
    <property type="gene designation" value="bet-1"/>
</dbReference>
<dbReference type="eggNOG" id="KOG1474">
    <property type="taxonomic scope" value="Eukaryota"/>
</dbReference>
<dbReference type="GeneTree" id="ENSGT00940000155359"/>
<dbReference type="InParanoid" id="Q95Y80"/>
<dbReference type="OMA" id="MAHGGMM"/>
<dbReference type="PhylomeDB" id="Q95Y80"/>
<dbReference type="SignaLink" id="Q95Y80"/>
<dbReference type="PRO" id="PR:Q95Y80"/>
<dbReference type="Proteomes" id="UP000001940">
    <property type="component" value="Chromosome I"/>
</dbReference>
<dbReference type="Bgee" id="WBGene00022473">
    <property type="expression patterns" value="Expressed in embryo and 4 other cell types or tissues"/>
</dbReference>
<dbReference type="ExpressionAtlas" id="Q95Y80">
    <property type="expression patterns" value="baseline and differential"/>
</dbReference>
<dbReference type="GO" id="GO:0000785">
    <property type="term" value="C:chromatin"/>
    <property type="evidence" value="ECO:0000318"/>
    <property type="project" value="GO_Central"/>
</dbReference>
<dbReference type="GO" id="GO:0005694">
    <property type="term" value="C:chromosome"/>
    <property type="evidence" value="ECO:0000314"/>
    <property type="project" value="WormBase"/>
</dbReference>
<dbReference type="GO" id="GO:0070090">
    <property type="term" value="C:metaphase plate"/>
    <property type="evidence" value="ECO:0000314"/>
    <property type="project" value="WormBase"/>
</dbReference>
<dbReference type="GO" id="GO:0005634">
    <property type="term" value="C:nucleus"/>
    <property type="evidence" value="ECO:0000314"/>
    <property type="project" value="WormBase"/>
</dbReference>
<dbReference type="GO" id="GO:0070577">
    <property type="term" value="F:lysine-acetylated histone binding"/>
    <property type="evidence" value="ECO:0000314"/>
    <property type="project" value="WormBase"/>
</dbReference>
<dbReference type="GO" id="GO:0032183">
    <property type="term" value="F:SUMO binding"/>
    <property type="evidence" value="ECO:0000353"/>
    <property type="project" value="WormBase"/>
</dbReference>
<dbReference type="GO" id="GO:0001708">
    <property type="term" value="P:cell fate specification"/>
    <property type="evidence" value="ECO:0000316"/>
    <property type="project" value="WormBase"/>
</dbReference>
<dbReference type="GO" id="GO:0006338">
    <property type="term" value="P:chromatin remodeling"/>
    <property type="evidence" value="ECO:0000318"/>
    <property type="project" value="GO_Central"/>
</dbReference>
<dbReference type="GO" id="GO:0071965">
    <property type="term" value="P:multicellular organismal locomotion"/>
    <property type="evidence" value="ECO:0000315"/>
    <property type="project" value="UniProtKB"/>
</dbReference>
<dbReference type="GO" id="GO:0046716">
    <property type="term" value="P:muscle cell cellular homeostasis"/>
    <property type="evidence" value="ECO:0000315"/>
    <property type="project" value="UniProtKB"/>
</dbReference>
<dbReference type="GO" id="GO:0009996">
    <property type="term" value="P:negative regulation of cell fate specification"/>
    <property type="evidence" value="ECO:0000315"/>
    <property type="project" value="UniProtKB"/>
</dbReference>
<dbReference type="GO" id="GO:0045892">
    <property type="term" value="P:negative regulation of DNA-templated transcription"/>
    <property type="evidence" value="ECO:0000315"/>
    <property type="project" value="UniProtKB"/>
</dbReference>
<dbReference type="GO" id="GO:0014018">
    <property type="term" value="P:neuroblast fate specification"/>
    <property type="evidence" value="ECO:0000315"/>
    <property type="project" value="WormBase"/>
</dbReference>
<dbReference type="GO" id="GO:0071168">
    <property type="term" value="P:protein localization to chromatin"/>
    <property type="evidence" value="ECO:0000315"/>
    <property type="project" value="UniProtKB"/>
</dbReference>
<dbReference type="GO" id="GO:0006355">
    <property type="term" value="P:regulation of DNA-templated transcription"/>
    <property type="evidence" value="ECO:0000318"/>
    <property type="project" value="GO_Central"/>
</dbReference>
<dbReference type="GO" id="GO:0031647">
    <property type="term" value="P:regulation of protein stability"/>
    <property type="evidence" value="ECO:0000315"/>
    <property type="project" value="UniProtKB"/>
</dbReference>
<dbReference type="GO" id="GO:0006357">
    <property type="term" value="P:regulation of transcription by RNA polymerase II"/>
    <property type="evidence" value="ECO:0000315"/>
    <property type="project" value="WormBase"/>
</dbReference>
<dbReference type="GO" id="GO:0040028">
    <property type="term" value="P:regulation of vulval development"/>
    <property type="evidence" value="ECO:0000315"/>
    <property type="project" value="WormBase"/>
</dbReference>
<dbReference type="CDD" id="cd05497">
    <property type="entry name" value="Bromo_Brdt_I_like"/>
    <property type="match status" value="1"/>
</dbReference>
<dbReference type="CDD" id="cd05498">
    <property type="entry name" value="Bromo_Brdt_II_like"/>
    <property type="match status" value="1"/>
</dbReference>
<dbReference type="FunFam" id="1.20.920.10:FF:000002">
    <property type="entry name" value="Bromodomain-containing protein 4"/>
    <property type="match status" value="1"/>
</dbReference>
<dbReference type="Gene3D" id="1.20.1270.220">
    <property type="match status" value="1"/>
</dbReference>
<dbReference type="Gene3D" id="1.20.920.10">
    <property type="entry name" value="Bromodomain-like"/>
    <property type="match status" value="2"/>
</dbReference>
<dbReference type="InterPro" id="IPR043508">
    <property type="entry name" value="Bromo_Brdt_I"/>
</dbReference>
<dbReference type="InterPro" id="IPR043509">
    <property type="entry name" value="Bromo_Brdt_II"/>
</dbReference>
<dbReference type="InterPro" id="IPR050935">
    <property type="entry name" value="Bromo_chromatin_reader"/>
</dbReference>
<dbReference type="InterPro" id="IPR001487">
    <property type="entry name" value="Bromodomain"/>
</dbReference>
<dbReference type="InterPro" id="IPR036427">
    <property type="entry name" value="Bromodomain-like_sf"/>
</dbReference>
<dbReference type="InterPro" id="IPR018359">
    <property type="entry name" value="Bromodomain_CS"/>
</dbReference>
<dbReference type="InterPro" id="IPR027353">
    <property type="entry name" value="NET_dom"/>
</dbReference>
<dbReference type="InterPro" id="IPR038336">
    <property type="entry name" value="NET_sf"/>
</dbReference>
<dbReference type="PANTHER" id="PTHR22880:SF225">
    <property type="entry name" value="BROMODOMAIN-CONTAINING PROTEIN BET-1-RELATED"/>
    <property type="match status" value="1"/>
</dbReference>
<dbReference type="PANTHER" id="PTHR22880">
    <property type="entry name" value="FALZ-RELATED BROMODOMAIN-CONTAINING PROTEINS"/>
    <property type="match status" value="1"/>
</dbReference>
<dbReference type="Pfam" id="PF17035">
    <property type="entry name" value="BET"/>
    <property type="match status" value="1"/>
</dbReference>
<dbReference type="Pfam" id="PF00439">
    <property type="entry name" value="Bromodomain"/>
    <property type="match status" value="2"/>
</dbReference>
<dbReference type="PRINTS" id="PR00503">
    <property type="entry name" value="BROMODOMAIN"/>
</dbReference>
<dbReference type="SMART" id="SM00297">
    <property type="entry name" value="BROMO"/>
    <property type="match status" value="2"/>
</dbReference>
<dbReference type="SUPFAM" id="SSF47370">
    <property type="entry name" value="Bromodomain"/>
    <property type="match status" value="2"/>
</dbReference>
<dbReference type="PROSITE" id="PS00633">
    <property type="entry name" value="BROMODOMAIN_1"/>
    <property type="match status" value="1"/>
</dbReference>
<dbReference type="PROSITE" id="PS50014">
    <property type="entry name" value="BROMODOMAIN_2"/>
    <property type="match status" value="2"/>
</dbReference>
<dbReference type="PROSITE" id="PS51525">
    <property type="entry name" value="NET"/>
    <property type="match status" value="1"/>
</dbReference>
<keyword id="KW-0025">Alternative splicing</keyword>
<keyword id="KW-0103">Bromodomain</keyword>
<keyword id="KW-0158">Chromosome</keyword>
<keyword id="KW-0175">Coiled coil</keyword>
<keyword id="KW-1017">Isopeptide bond</keyword>
<keyword id="KW-0539">Nucleus</keyword>
<keyword id="KW-1185">Reference proteome</keyword>
<keyword id="KW-0677">Repeat</keyword>
<keyword id="KW-0804">Transcription</keyword>
<keyword id="KW-0805">Transcription regulation</keyword>
<keyword id="KW-0832">Ubl conjugation</keyword>
<gene>
    <name evidence="12" type="primary">bet-1</name>
    <name evidence="12" type="ORF">Y119C1B.8</name>
</gene>
<accession>Q95Y80</accession>
<accession>H2KZI7</accession>
<name>BET1_CAEEL</name>
<organism evidence="11">
    <name type="scientific">Caenorhabditis elegans</name>
    <dbReference type="NCBI Taxonomy" id="6239"/>
    <lineage>
        <taxon>Eukaryota</taxon>
        <taxon>Metazoa</taxon>
        <taxon>Ecdysozoa</taxon>
        <taxon>Nematoda</taxon>
        <taxon>Chromadorea</taxon>
        <taxon>Rhabditida</taxon>
        <taxon>Rhabditina</taxon>
        <taxon>Rhabditomorpha</taxon>
        <taxon>Rhabditoidea</taxon>
        <taxon>Rhabditidae</taxon>
        <taxon>Peloderinae</taxon>
        <taxon>Caenorhabditis</taxon>
    </lineage>
</organism>
<proteinExistence type="evidence at protein level"/>
<reference evidence="11" key="1">
    <citation type="journal article" date="1998" name="Science">
        <title>Genome sequence of the nematode C. elegans: a platform for investigating biology.</title>
        <authorList>
            <consortium name="The C. elegans sequencing consortium"/>
        </authorList>
    </citation>
    <scope>NUCLEOTIDE SEQUENCE [LARGE SCALE GENOMIC DNA]</scope>
    <source>
        <strain evidence="11">Bristol N2</strain>
    </source>
</reference>
<reference evidence="10" key="2">
    <citation type="journal article" date="2010" name="Development">
        <title>Double bromodomain protein BET-1 and MYST HATs establish and maintain stable cell fates in C. elegans.</title>
        <authorList>
            <person name="Shibata Y."/>
            <person name="Takeshita H."/>
            <person name="Sasakawa N."/>
            <person name="Sawa H."/>
        </authorList>
    </citation>
    <scope>FUNCTION</scope>
    <scope>INTERACTION WITH HISTONE H4</scope>
    <scope>SUBCELLULAR LOCATION</scope>
    <scope>TISSUE SPECIFICITY</scope>
    <scope>DISRUPTION PHENOTYPE</scope>
    <scope>MUTAGENESIS OF VAL-113 AND GLU-585</scope>
</reference>
<reference evidence="10" key="3">
    <citation type="journal article" date="2013" name="Biol. Open">
        <title>Maintenance of muscle myosin levels in adult C. elegans requires both the double bromodomain protein BET-1 and sumoylation.</title>
        <authorList>
            <person name="Fisher K."/>
            <person name="Gee F."/>
            <person name="Wang S."/>
            <person name="Xue F."/>
            <person name="Knapp S."/>
            <person name="Philpott M."/>
            <person name="Wells C."/>
            <person name="Rodriguez M."/>
            <person name="Snoek L.B."/>
            <person name="Kammenga J."/>
            <person name="Poulin G.B."/>
        </authorList>
    </citation>
    <scope>FUNCTION</scope>
</reference>
<reference evidence="10" key="4">
    <citation type="journal article" date="2013" name="PLoS ONE">
        <title>An RNAi-based dimorphic genetic screen identified the double bromodomain protein BET-1 as a sumo-dependent attenuator of RAS-mediated signalling.</title>
        <authorList>
            <person name="Gee F."/>
            <person name="Fisher K."/>
            <person name="Klemstein U."/>
            <person name="Poulin G.B."/>
        </authorList>
    </citation>
    <scope>FUNCTION</scope>
    <scope>INTERACTION WITH SMO-1 AND UBC-9</scope>
    <scope>DOMAIN</scope>
    <scope>DISRUPTION PHENOTYPE</scope>
    <scope>SUMOYLATION AT LYS-252</scope>
    <scope>MUTAGENESIS OF LYS-252; LYS-253; LYS-264; 276-LYS-LYS-277; LYS-304; LYS-313 AND LYS-315</scope>
</reference>
<reference evidence="10" key="5">
    <citation type="journal article" date="2014" name="Development">
        <title>HTZ-1/H2A.z and MYS-1/MYST HAT act redundantly to maintain cell fates in somatic gonadal cells through repression of ceh-22 in C. elegans.</title>
        <authorList>
            <person name="Shibata Y."/>
            <person name="Sawa H."/>
            <person name="Nishiwaki K."/>
        </authorList>
    </citation>
    <scope>FUNCTION</scope>
    <scope>DISRUPTION PHENOTYPE</scope>
</reference>
<reference key="6">
    <citation type="journal article" date="2021" name="Proc. Natl. Acad. Sci. U.S.A.">
        <title>The nuclear ubiquitin ligase adaptor SPOP is a conserved regulator of C9orf72 dipeptide toxicity.</title>
        <authorList>
            <person name="Snoznik C."/>
            <person name="Medvedeva V."/>
            <person name="Mojsilovic-Petrovic J."/>
            <person name="Rudich P."/>
            <person name="Oosten J."/>
            <person name="Kalb R.G."/>
            <person name="Lamitina T."/>
        </authorList>
    </citation>
    <scope>DISRUPTION PHENOTYPE</scope>
</reference>
<sequence length="853" mass="94086">MSEGSGDQSQQRPWASPRQQPIKGIVQPRVLPPFGKPTRHTNKLDYIMTTVLKEAGKHKHVWPFQKPVDAVALCIPLYHERVARPMDLKTIENRLKSTYYTCAQECIDDIETVFQNCYTFNGKEDDVTIMAQNVHEVIKKSLEQAPREEHDMDVYWGKNKKKPAKSDGGSKSSSSKKNDARGPSEAPSEAGSEVSSVTTASAAAPTVSESASVAAKPERKVAGKKTGKRKAESEDDEKPEPLRAKREVAVVKKEVHQPLLPSMKPCLKLLNDFSTKKYQEFAWPFNEPVDAEQLGLHDYHKIIKEPMDLKSMKAKMESGAYKEPSDFEHDVRLMLRNCFLYNPVGDPVHSFGLRFQEVFDRRWAELGDSSSRASSVAPQSAPIAPTPKVAKSSAPKEPKESRKEHKKETTFEASGAKSEDLMQINNALSMIREREEKLKAELAAAQAIKDKLTSVKNRREDNPNEPFPEKLINETRALCTTQVGQNASSSSASSAALRNGRSKKAASARLYGYEFDSDDEDNKMALTYEEKRNLSNLINNLPNNQLNTIISIIQRRERSALMQQQLDDSEVELDFESLGDMCLREMGAFIKTIPTLNGNGDDEKPKTSSNPTSSGATGSKGSSSLESKNGKKKKNFNMSESSDDETSNSRKRRKRESSESQSSSSSDDDSDDEDRPSIPRKSGQPPSTSREWNQSSAPPPRMGGMGGQPPMSRVPASSSTSVSAIGKNNAAASSNSYQAPKPAPVPAPTSSRPPAAPRPPSKPKKTGGASILDTLLPDTFGASPPQFFQSQPTTSATIRSPTESQPGNGEDEQTRIQRMRMEAKRARQKEDEGSVSLSNQMEMMAAFEFDNTY</sequence>
<evidence type="ECO:0000255" key="1"/>
<evidence type="ECO:0000255" key="2">
    <source>
        <dbReference type="PROSITE-ProRule" id="PRU00035"/>
    </source>
</evidence>
<evidence type="ECO:0000255" key="3">
    <source>
        <dbReference type="PROSITE-ProRule" id="PRU00857"/>
    </source>
</evidence>
<evidence type="ECO:0000256" key="4">
    <source>
        <dbReference type="SAM" id="MobiDB-lite"/>
    </source>
</evidence>
<evidence type="ECO:0000269" key="5">
    <source>
    </source>
</evidence>
<evidence type="ECO:0000269" key="6">
    <source>
    </source>
</evidence>
<evidence type="ECO:0000269" key="7">
    <source>
    </source>
</evidence>
<evidence type="ECO:0000269" key="8">
    <source>
    </source>
</evidence>
<evidence type="ECO:0000269" key="9">
    <source>
    </source>
</evidence>
<evidence type="ECO:0000305" key="10"/>
<evidence type="ECO:0000312" key="11">
    <source>
        <dbReference type="Proteomes" id="UP000001940"/>
    </source>
</evidence>
<evidence type="ECO:0000312" key="12">
    <source>
        <dbReference type="WormBase" id="Y119C1B.8a"/>
    </source>
</evidence>
<evidence type="ECO:0000312" key="13">
    <source>
        <dbReference type="WormBase" id="Y119C1B.8b"/>
    </source>
</evidence>